<organism>
    <name type="scientific">Lacticaseibacillus casei (strain BL23)</name>
    <name type="common">Lactobacillus casei</name>
    <dbReference type="NCBI Taxonomy" id="543734"/>
    <lineage>
        <taxon>Bacteria</taxon>
        <taxon>Bacillati</taxon>
        <taxon>Bacillota</taxon>
        <taxon>Bacilli</taxon>
        <taxon>Lactobacillales</taxon>
        <taxon>Lactobacillaceae</taxon>
        <taxon>Lacticaseibacillus</taxon>
    </lineage>
</organism>
<accession>B3W963</accession>
<dbReference type="EC" id="4.99.1.9" evidence="1"/>
<dbReference type="EMBL" id="FM177140">
    <property type="protein sequence ID" value="CAQ67232.1"/>
    <property type="molecule type" value="Genomic_DNA"/>
</dbReference>
<dbReference type="SMR" id="B3W963"/>
<dbReference type="KEGG" id="lcb:LCABL_21650"/>
<dbReference type="HOGENOM" id="CLU_018884_0_0_9"/>
<dbReference type="UniPathway" id="UPA00252"/>
<dbReference type="GO" id="GO:0005737">
    <property type="term" value="C:cytoplasm"/>
    <property type="evidence" value="ECO:0007669"/>
    <property type="project" value="UniProtKB-SubCell"/>
</dbReference>
<dbReference type="GO" id="GO:0004325">
    <property type="term" value="F:ferrochelatase activity"/>
    <property type="evidence" value="ECO:0007669"/>
    <property type="project" value="UniProtKB-UniRule"/>
</dbReference>
<dbReference type="GO" id="GO:0046872">
    <property type="term" value="F:metal ion binding"/>
    <property type="evidence" value="ECO:0007669"/>
    <property type="project" value="UniProtKB-KW"/>
</dbReference>
<dbReference type="GO" id="GO:0006783">
    <property type="term" value="P:heme biosynthetic process"/>
    <property type="evidence" value="ECO:0007669"/>
    <property type="project" value="UniProtKB-UniRule"/>
</dbReference>
<dbReference type="CDD" id="cd00419">
    <property type="entry name" value="Ferrochelatase_C"/>
    <property type="match status" value="1"/>
</dbReference>
<dbReference type="CDD" id="cd03411">
    <property type="entry name" value="Ferrochelatase_N"/>
    <property type="match status" value="1"/>
</dbReference>
<dbReference type="Gene3D" id="3.40.50.1400">
    <property type="match status" value="2"/>
</dbReference>
<dbReference type="HAMAP" id="MF_00323">
    <property type="entry name" value="Ferrochelatase"/>
    <property type="match status" value="1"/>
</dbReference>
<dbReference type="InterPro" id="IPR001015">
    <property type="entry name" value="Ferrochelatase"/>
</dbReference>
<dbReference type="InterPro" id="IPR019772">
    <property type="entry name" value="Ferrochelatase_AS"/>
</dbReference>
<dbReference type="InterPro" id="IPR033644">
    <property type="entry name" value="Ferrochelatase_C"/>
</dbReference>
<dbReference type="InterPro" id="IPR033659">
    <property type="entry name" value="Ferrochelatase_N"/>
</dbReference>
<dbReference type="NCBIfam" id="TIGR00109">
    <property type="entry name" value="hemH"/>
    <property type="match status" value="1"/>
</dbReference>
<dbReference type="PANTHER" id="PTHR11108">
    <property type="entry name" value="FERROCHELATASE"/>
    <property type="match status" value="1"/>
</dbReference>
<dbReference type="PANTHER" id="PTHR11108:SF1">
    <property type="entry name" value="FERROCHELATASE, MITOCHONDRIAL"/>
    <property type="match status" value="1"/>
</dbReference>
<dbReference type="Pfam" id="PF00762">
    <property type="entry name" value="Ferrochelatase"/>
    <property type="match status" value="1"/>
</dbReference>
<dbReference type="SUPFAM" id="SSF53800">
    <property type="entry name" value="Chelatase"/>
    <property type="match status" value="1"/>
</dbReference>
<dbReference type="PROSITE" id="PS00534">
    <property type="entry name" value="FERROCHELATASE"/>
    <property type="match status" value="1"/>
</dbReference>
<gene>
    <name evidence="1" type="primary">cpfC</name>
    <name type="ordered locus">LCABL_21650</name>
</gene>
<feature type="chain" id="PRO_1000116055" description="Coproporphyrin III ferrochelatase">
    <location>
        <begin position="1"/>
        <end position="321"/>
    </location>
</feature>
<feature type="binding site" evidence="1">
    <location>
        <position position="185"/>
    </location>
    <ligand>
        <name>Fe(2+)</name>
        <dbReference type="ChEBI" id="CHEBI:29033"/>
    </ligand>
</feature>
<feature type="binding site" evidence="1">
    <location>
        <position position="267"/>
    </location>
    <ligand>
        <name>Fe(2+)</name>
        <dbReference type="ChEBI" id="CHEBI:29033"/>
    </ligand>
</feature>
<keyword id="KW-0963">Cytoplasm</keyword>
<keyword id="KW-0350">Heme biosynthesis</keyword>
<keyword id="KW-0408">Iron</keyword>
<keyword id="KW-0456">Lyase</keyword>
<keyword id="KW-0479">Metal-binding</keyword>
<keyword id="KW-0627">Porphyrin biosynthesis</keyword>
<comment type="function">
    <text evidence="1">Involved in coproporphyrin-dependent heme b biosynthesis. Catalyzes the insertion of ferrous iron into coproporphyrin III to form Fe-coproporphyrin III.</text>
</comment>
<comment type="catalytic activity">
    <reaction evidence="1">
        <text>Fe-coproporphyrin III + 2 H(+) = coproporphyrin III + Fe(2+)</text>
        <dbReference type="Rhea" id="RHEA:49572"/>
        <dbReference type="ChEBI" id="CHEBI:15378"/>
        <dbReference type="ChEBI" id="CHEBI:29033"/>
        <dbReference type="ChEBI" id="CHEBI:68438"/>
        <dbReference type="ChEBI" id="CHEBI:131725"/>
        <dbReference type="EC" id="4.99.1.9"/>
    </reaction>
    <physiologicalReaction direction="right-to-left" evidence="1">
        <dbReference type="Rhea" id="RHEA:49574"/>
    </physiologicalReaction>
</comment>
<comment type="pathway">
    <text evidence="1">Porphyrin-containing compound metabolism; protoheme biosynthesis.</text>
</comment>
<comment type="subcellular location">
    <subcellularLocation>
        <location evidence="1">Cytoplasm</location>
    </subcellularLocation>
</comment>
<comment type="similarity">
    <text evidence="1">Belongs to the ferrochelatase family.</text>
</comment>
<reference key="1">
    <citation type="submission" date="2008-06" db="EMBL/GenBank/DDBJ databases">
        <title>Lactobacillus casei BL23 complete genome sequence.</title>
        <authorList>
            <person name="Maze A."/>
            <person name="Boel G."/>
            <person name="Bourand A."/>
            <person name="Loux V."/>
            <person name="Gibrat J.F."/>
            <person name="Zuniga M."/>
            <person name="Hartke A."/>
            <person name="Deutscher J."/>
        </authorList>
    </citation>
    <scope>NUCLEOTIDE SEQUENCE [LARGE SCALE GENOMIC DNA]</scope>
    <source>
        <strain>BL23</strain>
    </source>
</reference>
<proteinExistence type="inferred from homology"/>
<protein>
    <recommendedName>
        <fullName evidence="1">Coproporphyrin III ferrochelatase</fullName>
        <ecNumber evidence="1">4.99.1.9</ecNumber>
    </recommendedName>
</protein>
<evidence type="ECO:0000255" key="1">
    <source>
        <dbReference type="HAMAP-Rule" id="MF_00323"/>
    </source>
</evidence>
<name>CPFC_LACCB</name>
<sequence>MAKGLLIVNLGSPVSPETKDVRRYLREFLSDQNVITMPKALWQPILRGFILPFRSWRSATFYKHEWTQAGSPLIAYTQVTRDRLRERLPDWDVQMAMNYGGEYPIGETLQTMAARGDAPIVVIPLFPEYTQSTTKTILDKVAASGVKTVVIDRFYDHSDYQKILAQQIDDAYEAGAYDTVILSYHGIPTAMVRHGDPYQQECETTTAGVKQYLKKVPQTKVEMCYQSKFGPVPWLKPYLRNRLMELAALGKRNVLVATPSFVADCLETLEENNVQNYQTFRANGGKNFATVRPMNGCEPFCDFLAKLAKDKIAAEANHGKA</sequence>